<comment type="function">
    <text evidence="1">Plays an important role in the de novo pathway of purine nucleotide biosynthesis. Catalyzes the first committed step in the biosynthesis of AMP from IMP.</text>
</comment>
<comment type="catalytic activity">
    <reaction evidence="1">
        <text>IMP + L-aspartate + GTP = N(6)-(1,2-dicarboxyethyl)-AMP + GDP + phosphate + 2 H(+)</text>
        <dbReference type="Rhea" id="RHEA:15753"/>
        <dbReference type="ChEBI" id="CHEBI:15378"/>
        <dbReference type="ChEBI" id="CHEBI:29991"/>
        <dbReference type="ChEBI" id="CHEBI:37565"/>
        <dbReference type="ChEBI" id="CHEBI:43474"/>
        <dbReference type="ChEBI" id="CHEBI:57567"/>
        <dbReference type="ChEBI" id="CHEBI:58053"/>
        <dbReference type="ChEBI" id="CHEBI:58189"/>
        <dbReference type="EC" id="6.3.4.4"/>
    </reaction>
</comment>
<comment type="cofactor">
    <cofactor evidence="1">
        <name>Mg(2+)</name>
        <dbReference type="ChEBI" id="CHEBI:18420"/>
    </cofactor>
    <text evidence="1">Binds 1 Mg(2+) ion per subunit.</text>
</comment>
<comment type="pathway">
    <text evidence="1">Purine metabolism; AMP biosynthesis via de novo pathway; AMP from IMP: step 1/2.</text>
</comment>
<comment type="subunit">
    <text evidence="1">Homodimer.</text>
</comment>
<comment type="subcellular location">
    <subcellularLocation>
        <location evidence="1">Cytoplasm</location>
    </subcellularLocation>
</comment>
<comment type="similarity">
    <text evidence="1">Belongs to the adenylosuccinate synthetase family.</text>
</comment>
<feature type="chain" id="PRO_1000089284" description="Adenylosuccinate synthetase">
    <location>
        <begin position="1"/>
        <end position="435"/>
    </location>
</feature>
<feature type="active site" description="Proton acceptor" evidence="1">
    <location>
        <position position="12"/>
    </location>
</feature>
<feature type="active site" description="Proton donor" evidence="1">
    <location>
        <position position="40"/>
    </location>
</feature>
<feature type="binding site" evidence="1">
    <location>
        <begin position="11"/>
        <end position="17"/>
    </location>
    <ligand>
        <name>GTP</name>
        <dbReference type="ChEBI" id="CHEBI:37565"/>
    </ligand>
</feature>
<feature type="binding site" description="in other chain" evidence="1">
    <location>
        <begin position="12"/>
        <end position="15"/>
    </location>
    <ligand>
        <name>IMP</name>
        <dbReference type="ChEBI" id="CHEBI:58053"/>
        <note>ligand shared between dimeric partners</note>
    </ligand>
</feature>
<feature type="binding site" evidence="1">
    <location>
        <position position="12"/>
    </location>
    <ligand>
        <name>Mg(2+)</name>
        <dbReference type="ChEBI" id="CHEBI:18420"/>
    </ligand>
</feature>
<feature type="binding site" description="in other chain" evidence="1">
    <location>
        <begin position="37"/>
        <end position="40"/>
    </location>
    <ligand>
        <name>IMP</name>
        <dbReference type="ChEBI" id="CHEBI:58053"/>
        <note>ligand shared between dimeric partners</note>
    </ligand>
</feature>
<feature type="binding site" evidence="1">
    <location>
        <begin position="39"/>
        <end position="41"/>
    </location>
    <ligand>
        <name>GTP</name>
        <dbReference type="ChEBI" id="CHEBI:37565"/>
    </ligand>
</feature>
<feature type="binding site" evidence="1">
    <location>
        <position position="39"/>
    </location>
    <ligand>
        <name>Mg(2+)</name>
        <dbReference type="ChEBI" id="CHEBI:18420"/>
    </ligand>
</feature>
<feature type="binding site" description="in other chain" evidence="1">
    <location>
        <position position="128"/>
    </location>
    <ligand>
        <name>IMP</name>
        <dbReference type="ChEBI" id="CHEBI:58053"/>
        <note>ligand shared between dimeric partners</note>
    </ligand>
</feature>
<feature type="binding site" evidence="1">
    <location>
        <position position="142"/>
    </location>
    <ligand>
        <name>IMP</name>
        <dbReference type="ChEBI" id="CHEBI:58053"/>
        <note>ligand shared between dimeric partners</note>
    </ligand>
</feature>
<feature type="binding site" description="in other chain" evidence="1">
    <location>
        <position position="223"/>
    </location>
    <ligand>
        <name>IMP</name>
        <dbReference type="ChEBI" id="CHEBI:58053"/>
        <note>ligand shared between dimeric partners</note>
    </ligand>
</feature>
<feature type="binding site" description="in other chain" evidence="1">
    <location>
        <position position="238"/>
    </location>
    <ligand>
        <name>IMP</name>
        <dbReference type="ChEBI" id="CHEBI:58053"/>
        <note>ligand shared between dimeric partners</note>
    </ligand>
</feature>
<feature type="binding site" evidence="1">
    <location>
        <begin position="298"/>
        <end position="304"/>
    </location>
    <ligand>
        <name>substrate</name>
    </ligand>
</feature>
<feature type="binding site" description="in other chain" evidence="1">
    <location>
        <position position="302"/>
    </location>
    <ligand>
        <name>IMP</name>
        <dbReference type="ChEBI" id="CHEBI:58053"/>
        <note>ligand shared between dimeric partners</note>
    </ligand>
</feature>
<feature type="binding site" evidence="1">
    <location>
        <position position="304"/>
    </location>
    <ligand>
        <name>GTP</name>
        <dbReference type="ChEBI" id="CHEBI:37565"/>
    </ligand>
</feature>
<feature type="binding site" evidence="1">
    <location>
        <begin position="330"/>
        <end position="332"/>
    </location>
    <ligand>
        <name>GTP</name>
        <dbReference type="ChEBI" id="CHEBI:37565"/>
    </ligand>
</feature>
<feature type="binding site" evidence="1">
    <location>
        <begin position="412"/>
        <end position="414"/>
    </location>
    <ligand>
        <name>GTP</name>
        <dbReference type="ChEBI" id="CHEBI:37565"/>
    </ligand>
</feature>
<evidence type="ECO:0000255" key="1">
    <source>
        <dbReference type="HAMAP-Rule" id="MF_00011"/>
    </source>
</evidence>
<proteinExistence type="inferred from homology"/>
<keyword id="KW-0963">Cytoplasm</keyword>
<keyword id="KW-0342">GTP-binding</keyword>
<keyword id="KW-0436">Ligase</keyword>
<keyword id="KW-0460">Magnesium</keyword>
<keyword id="KW-0479">Metal-binding</keyword>
<keyword id="KW-0547">Nucleotide-binding</keyword>
<keyword id="KW-0658">Purine biosynthesis</keyword>
<accession>B6J083</accession>
<sequence>MNIVILGTQWGDEGKGKIVDMLTEDVAAVVRFQGGHNAGHTLIIDGEKTILRLIPSGILREGVLCLIGNGVVLSPPALMEEIEELNAKGIPVTERLRISSACNLLLPYHVALDKAREAELGTKAIGTTGRGIGPAYEDKVARRGIRAMDLLHPDQLLEKIKKATAYHNIQLEHYYHQTPLDYQSIYNQLMEFREKIKPMIGDVSALLGNLRRQNKHIIFEGAQGSLLDIDLGTYPYVTSSNTTAGSAATGSGFGPLYFDRVLGITKAYVTRVGAGPFPTELTNEEGKKMAKRGNEFGSVTGRPRRCGWFDVISMRRTIQINSLTGIVLTKLDVLDEFAKIHLCTAYRCDGEVVNEPPFDQSLLESCEPVYEEMPGWQTSTYGLTDYSEMPKEARNYISRLEELLGVPITIISTGPDRKHTIVRQAVFNQVITAKG</sequence>
<gene>
    <name evidence="1" type="primary">purA</name>
    <name type="ordered locus">CbuG_1009</name>
</gene>
<organism>
    <name type="scientific">Coxiella burnetii (strain CbuG_Q212)</name>
    <name type="common">Coxiella burnetii (strain Q212)</name>
    <dbReference type="NCBI Taxonomy" id="434923"/>
    <lineage>
        <taxon>Bacteria</taxon>
        <taxon>Pseudomonadati</taxon>
        <taxon>Pseudomonadota</taxon>
        <taxon>Gammaproteobacteria</taxon>
        <taxon>Legionellales</taxon>
        <taxon>Coxiellaceae</taxon>
        <taxon>Coxiella</taxon>
    </lineage>
</organism>
<dbReference type="EC" id="6.3.4.4" evidence="1"/>
<dbReference type="EMBL" id="CP001019">
    <property type="protein sequence ID" value="ACJ18361.1"/>
    <property type="molecule type" value="Genomic_DNA"/>
</dbReference>
<dbReference type="RefSeq" id="WP_005768588.1">
    <property type="nucleotide sequence ID" value="NC_011527.1"/>
</dbReference>
<dbReference type="SMR" id="B6J083"/>
<dbReference type="KEGG" id="cbg:CbuG_1009"/>
<dbReference type="HOGENOM" id="CLU_029848_0_0_6"/>
<dbReference type="UniPathway" id="UPA00075">
    <property type="reaction ID" value="UER00335"/>
</dbReference>
<dbReference type="GO" id="GO:0005737">
    <property type="term" value="C:cytoplasm"/>
    <property type="evidence" value="ECO:0007669"/>
    <property type="project" value="UniProtKB-SubCell"/>
</dbReference>
<dbReference type="GO" id="GO:0004019">
    <property type="term" value="F:adenylosuccinate synthase activity"/>
    <property type="evidence" value="ECO:0007669"/>
    <property type="project" value="UniProtKB-UniRule"/>
</dbReference>
<dbReference type="GO" id="GO:0005525">
    <property type="term" value="F:GTP binding"/>
    <property type="evidence" value="ECO:0007669"/>
    <property type="project" value="UniProtKB-UniRule"/>
</dbReference>
<dbReference type="GO" id="GO:0000287">
    <property type="term" value="F:magnesium ion binding"/>
    <property type="evidence" value="ECO:0007669"/>
    <property type="project" value="UniProtKB-UniRule"/>
</dbReference>
<dbReference type="GO" id="GO:0044208">
    <property type="term" value="P:'de novo' AMP biosynthetic process"/>
    <property type="evidence" value="ECO:0007669"/>
    <property type="project" value="UniProtKB-UniRule"/>
</dbReference>
<dbReference type="GO" id="GO:0046040">
    <property type="term" value="P:IMP metabolic process"/>
    <property type="evidence" value="ECO:0007669"/>
    <property type="project" value="TreeGrafter"/>
</dbReference>
<dbReference type="CDD" id="cd03108">
    <property type="entry name" value="AdSS"/>
    <property type="match status" value="1"/>
</dbReference>
<dbReference type="FunFam" id="1.10.300.10:FF:000001">
    <property type="entry name" value="Adenylosuccinate synthetase"/>
    <property type="match status" value="1"/>
</dbReference>
<dbReference type="FunFam" id="3.90.170.10:FF:000001">
    <property type="entry name" value="Adenylosuccinate synthetase"/>
    <property type="match status" value="1"/>
</dbReference>
<dbReference type="Gene3D" id="3.40.440.10">
    <property type="entry name" value="Adenylosuccinate Synthetase, subunit A, domain 1"/>
    <property type="match status" value="1"/>
</dbReference>
<dbReference type="Gene3D" id="1.10.300.10">
    <property type="entry name" value="Adenylosuccinate Synthetase, subunit A, domain 2"/>
    <property type="match status" value="1"/>
</dbReference>
<dbReference type="Gene3D" id="3.90.170.10">
    <property type="entry name" value="Adenylosuccinate Synthetase, subunit A, domain 3"/>
    <property type="match status" value="1"/>
</dbReference>
<dbReference type="HAMAP" id="MF_00011">
    <property type="entry name" value="Adenylosucc_synth"/>
    <property type="match status" value="1"/>
</dbReference>
<dbReference type="InterPro" id="IPR018220">
    <property type="entry name" value="Adenylosuccin_syn_GTP-bd"/>
</dbReference>
<dbReference type="InterPro" id="IPR033128">
    <property type="entry name" value="Adenylosuccin_syn_Lys_AS"/>
</dbReference>
<dbReference type="InterPro" id="IPR042109">
    <property type="entry name" value="Adenylosuccinate_synth_dom1"/>
</dbReference>
<dbReference type="InterPro" id="IPR042110">
    <property type="entry name" value="Adenylosuccinate_synth_dom2"/>
</dbReference>
<dbReference type="InterPro" id="IPR042111">
    <property type="entry name" value="Adenylosuccinate_synth_dom3"/>
</dbReference>
<dbReference type="InterPro" id="IPR001114">
    <property type="entry name" value="Adenylosuccinate_synthetase"/>
</dbReference>
<dbReference type="InterPro" id="IPR027417">
    <property type="entry name" value="P-loop_NTPase"/>
</dbReference>
<dbReference type="NCBIfam" id="NF002223">
    <property type="entry name" value="PRK01117.1"/>
    <property type="match status" value="1"/>
</dbReference>
<dbReference type="NCBIfam" id="TIGR00184">
    <property type="entry name" value="purA"/>
    <property type="match status" value="1"/>
</dbReference>
<dbReference type="PANTHER" id="PTHR11846">
    <property type="entry name" value="ADENYLOSUCCINATE SYNTHETASE"/>
    <property type="match status" value="1"/>
</dbReference>
<dbReference type="PANTHER" id="PTHR11846:SF0">
    <property type="entry name" value="ADENYLOSUCCINATE SYNTHETASE"/>
    <property type="match status" value="1"/>
</dbReference>
<dbReference type="Pfam" id="PF00709">
    <property type="entry name" value="Adenylsucc_synt"/>
    <property type="match status" value="1"/>
</dbReference>
<dbReference type="SMART" id="SM00788">
    <property type="entry name" value="Adenylsucc_synt"/>
    <property type="match status" value="1"/>
</dbReference>
<dbReference type="SUPFAM" id="SSF52540">
    <property type="entry name" value="P-loop containing nucleoside triphosphate hydrolases"/>
    <property type="match status" value="1"/>
</dbReference>
<dbReference type="PROSITE" id="PS01266">
    <property type="entry name" value="ADENYLOSUCCIN_SYN_1"/>
    <property type="match status" value="1"/>
</dbReference>
<dbReference type="PROSITE" id="PS00513">
    <property type="entry name" value="ADENYLOSUCCIN_SYN_2"/>
    <property type="match status" value="1"/>
</dbReference>
<protein>
    <recommendedName>
        <fullName evidence="1">Adenylosuccinate synthetase</fullName>
        <shortName evidence="1">AMPSase</shortName>
        <shortName evidence="1">AdSS</shortName>
        <ecNumber evidence="1">6.3.4.4</ecNumber>
    </recommendedName>
    <alternativeName>
        <fullName evidence="1">IMP--aspartate ligase</fullName>
    </alternativeName>
</protein>
<reference key="1">
    <citation type="journal article" date="2009" name="Infect. Immun.">
        <title>Comparative genomics reveal extensive transposon-mediated genomic plasticity and diversity among potential effector proteins within the genus Coxiella.</title>
        <authorList>
            <person name="Beare P.A."/>
            <person name="Unsworth N."/>
            <person name="Andoh M."/>
            <person name="Voth D.E."/>
            <person name="Omsland A."/>
            <person name="Gilk S.D."/>
            <person name="Williams K.P."/>
            <person name="Sobral B.W."/>
            <person name="Kupko J.J. III"/>
            <person name="Porcella S.F."/>
            <person name="Samuel J.E."/>
            <person name="Heinzen R.A."/>
        </authorList>
    </citation>
    <scope>NUCLEOTIDE SEQUENCE [LARGE SCALE GENOMIC DNA]</scope>
    <source>
        <strain>CbuG_Q212</strain>
    </source>
</reference>
<name>PURA_COXB2</name>